<evidence type="ECO:0000250" key="1"/>
<evidence type="ECO:0000255" key="2"/>
<evidence type="ECO:0000305" key="3"/>
<sequence length="251" mass="27653">MLARRIIAALDIKDGRVVKGIKFKNIRDAGDPIELAKRYESEGIDEIVFLDITASYEKRKILLDLVERVAEEIYVPFTVGGGIRTVEEAREIIRRGADKIFINTAAVENPSLIKEIADLIGSANLVVAIDAKWNGKFWEVYTHGGRKPRGMDAVEWAKRVEELGAGEILLTSMDTDGTKQGFDIPLTKAVVDAVNIPVIASGGAGKPEHFLEVFRIGSDAALAASIFHYGEYTVRELKMFLAKNGIPVRLD</sequence>
<protein>
    <recommendedName>
        <fullName>Imidazole glycerol phosphate synthase subunit HisF</fullName>
        <ecNumber>4.3.2.10</ecNumber>
    </recommendedName>
    <alternativeName>
        <fullName>IGP synthase cyclase subunit</fullName>
    </alternativeName>
    <alternativeName>
        <fullName>IGP synthase subunit HisF</fullName>
    </alternativeName>
    <alternativeName>
        <fullName>ImGP synthase subunit HisF</fullName>
        <shortName>IGPS subunit HisF</shortName>
    </alternativeName>
</protein>
<feature type="chain" id="PRO_0000142287" description="Imidazole glycerol phosphate synthase subunit HisF">
    <location>
        <begin position="1"/>
        <end position="251"/>
    </location>
</feature>
<feature type="active site" evidence="2">
    <location>
        <position position="11"/>
    </location>
</feature>
<feature type="active site" evidence="2">
    <location>
        <position position="130"/>
    </location>
</feature>
<proteinExistence type="inferred from homology"/>
<comment type="function">
    <text evidence="1">IGPS catalyzes the conversion of PRFAR and glutamine to IGP, AICAR and glutamate. The HisF subunit catalyzes the cyclization activity that produces IGP and AICAR from PRFAR using the ammonia provided by the HisH subunit (By similarity).</text>
</comment>
<comment type="catalytic activity">
    <reaction>
        <text>5-[(5-phospho-1-deoxy-D-ribulos-1-ylimino)methylamino]-1-(5-phospho-beta-D-ribosyl)imidazole-4-carboxamide + L-glutamine = D-erythro-1-(imidazol-4-yl)glycerol 3-phosphate + 5-amino-1-(5-phospho-beta-D-ribosyl)imidazole-4-carboxamide + L-glutamate + H(+)</text>
        <dbReference type="Rhea" id="RHEA:24793"/>
        <dbReference type="ChEBI" id="CHEBI:15378"/>
        <dbReference type="ChEBI" id="CHEBI:29985"/>
        <dbReference type="ChEBI" id="CHEBI:58278"/>
        <dbReference type="ChEBI" id="CHEBI:58359"/>
        <dbReference type="ChEBI" id="CHEBI:58475"/>
        <dbReference type="ChEBI" id="CHEBI:58525"/>
        <dbReference type="EC" id="4.3.2.10"/>
    </reaction>
</comment>
<comment type="pathway">
    <text>Amino-acid biosynthesis; L-histidine biosynthesis; L-histidine from 5-phospho-alpha-D-ribose 1-diphosphate: step 5/9.</text>
</comment>
<comment type="subunit">
    <text evidence="1">Heterodimer of HisH and HisF.</text>
</comment>
<comment type="subcellular location">
    <subcellularLocation>
        <location evidence="1">Cytoplasm</location>
    </subcellularLocation>
</comment>
<comment type="similarity">
    <text evidence="3">Belongs to the HisA/HisF family.</text>
</comment>
<comment type="sequence caution" evidence="3">
    <conflict type="erroneous initiation">
        <sequence resource="EMBL-CDS" id="AAL81787"/>
    </conflict>
</comment>
<dbReference type="EC" id="4.3.2.10"/>
<dbReference type="EMBL" id="AE009950">
    <property type="protein sequence ID" value="AAL81787.1"/>
    <property type="status" value="ALT_INIT"/>
    <property type="molecule type" value="Genomic_DNA"/>
</dbReference>
<dbReference type="SMR" id="P58800"/>
<dbReference type="STRING" id="186497.PF1663"/>
<dbReference type="PaxDb" id="186497-PF1663"/>
<dbReference type="KEGG" id="pfu:PF1663"/>
<dbReference type="PATRIC" id="fig|186497.12.peg.1729"/>
<dbReference type="eggNOG" id="arCOG00617">
    <property type="taxonomic scope" value="Archaea"/>
</dbReference>
<dbReference type="HOGENOM" id="CLU_048577_4_0_2"/>
<dbReference type="OrthoDB" id="6261at2157"/>
<dbReference type="PhylomeDB" id="P58800"/>
<dbReference type="UniPathway" id="UPA00031">
    <property type="reaction ID" value="UER00010"/>
</dbReference>
<dbReference type="Proteomes" id="UP000001013">
    <property type="component" value="Chromosome"/>
</dbReference>
<dbReference type="GO" id="GO:0005737">
    <property type="term" value="C:cytoplasm"/>
    <property type="evidence" value="ECO:0007669"/>
    <property type="project" value="UniProtKB-SubCell"/>
</dbReference>
<dbReference type="GO" id="GO:0000107">
    <property type="term" value="F:imidazoleglycerol-phosphate synthase activity"/>
    <property type="evidence" value="ECO:0007669"/>
    <property type="project" value="UniProtKB-UniRule"/>
</dbReference>
<dbReference type="GO" id="GO:0016829">
    <property type="term" value="F:lyase activity"/>
    <property type="evidence" value="ECO:0007669"/>
    <property type="project" value="UniProtKB-KW"/>
</dbReference>
<dbReference type="GO" id="GO:0000105">
    <property type="term" value="P:L-histidine biosynthetic process"/>
    <property type="evidence" value="ECO:0007669"/>
    <property type="project" value="UniProtKB-UniRule"/>
</dbReference>
<dbReference type="CDD" id="cd04731">
    <property type="entry name" value="HisF"/>
    <property type="match status" value="1"/>
</dbReference>
<dbReference type="FunFam" id="3.20.20.70:FF:000006">
    <property type="entry name" value="Imidazole glycerol phosphate synthase subunit HisF"/>
    <property type="match status" value="1"/>
</dbReference>
<dbReference type="Gene3D" id="3.20.20.70">
    <property type="entry name" value="Aldolase class I"/>
    <property type="match status" value="1"/>
</dbReference>
<dbReference type="HAMAP" id="MF_01013">
    <property type="entry name" value="HisF"/>
    <property type="match status" value="1"/>
</dbReference>
<dbReference type="InterPro" id="IPR013785">
    <property type="entry name" value="Aldolase_TIM"/>
</dbReference>
<dbReference type="InterPro" id="IPR006062">
    <property type="entry name" value="His_biosynth"/>
</dbReference>
<dbReference type="InterPro" id="IPR004651">
    <property type="entry name" value="HisF"/>
</dbReference>
<dbReference type="InterPro" id="IPR050064">
    <property type="entry name" value="IGPS_HisA/HisF"/>
</dbReference>
<dbReference type="InterPro" id="IPR011060">
    <property type="entry name" value="RibuloseP-bd_barrel"/>
</dbReference>
<dbReference type="NCBIfam" id="TIGR00735">
    <property type="entry name" value="hisF"/>
    <property type="match status" value="1"/>
</dbReference>
<dbReference type="PANTHER" id="PTHR21235:SF2">
    <property type="entry name" value="IMIDAZOLE GLYCEROL PHOSPHATE SYNTHASE HISHF"/>
    <property type="match status" value="1"/>
</dbReference>
<dbReference type="PANTHER" id="PTHR21235">
    <property type="entry name" value="IMIDAZOLE GLYCEROL PHOSPHATE SYNTHASE SUBUNIT HISF/H IGP SYNTHASE SUBUNIT HISF/H"/>
    <property type="match status" value="1"/>
</dbReference>
<dbReference type="Pfam" id="PF00977">
    <property type="entry name" value="His_biosynth"/>
    <property type="match status" value="1"/>
</dbReference>
<dbReference type="SUPFAM" id="SSF51366">
    <property type="entry name" value="Ribulose-phoshate binding barrel"/>
    <property type="match status" value="1"/>
</dbReference>
<reference key="1">
    <citation type="journal article" date="1999" name="Genetics">
        <title>Divergence of the hyperthermophilic archaea Pyrococcus furiosus and P. horikoshii inferred from complete genomic sequences.</title>
        <authorList>
            <person name="Maeder D.L."/>
            <person name="Weiss R.B."/>
            <person name="Dunn D.M."/>
            <person name="Cherry J.L."/>
            <person name="Gonzalez J.M."/>
            <person name="DiRuggiero J."/>
            <person name="Robb F.T."/>
        </authorList>
    </citation>
    <scope>NUCLEOTIDE SEQUENCE [LARGE SCALE GENOMIC DNA]</scope>
    <source>
        <strain>ATCC 43587 / DSM 3638 / JCM 8422 / Vc1</strain>
    </source>
</reference>
<gene>
    <name type="primary">hisF</name>
    <name type="ordered locus">PF1663</name>
</gene>
<keyword id="KW-0028">Amino-acid biosynthesis</keyword>
<keyword id="KW-0963">Cytoplasm</keyword>
<keyword id="KW-0368">Histidine biosynthesis</keyword>
<keyword id="KW-0456">Lyase</keyword>
<keyword id="KW-1185">Reference proteome</keyword>
<accession>P58800</accession>
<name>HIS6_PYRFU</name>
<organism>
    <name type="scientific">Pyrococcus furiosus (strain ATCC 43587 / DSM 3638 / JCM 8422 / Vc1)</name>
    <dbReference type="NCBI Taxonomy" id="186497"/>
    <lineage>
        <taxon>Archaea</taxon>
        <taxon>Methanobacteriati</taxon>
        <taxon>Methanobacteriota</taxon>
        <taxon>Thermococci</taxon>
        <taxon>Thermococcales</taxon>
        <taxon>Thermococcaceae</taxon>
        <taxon>Pyrococcus</taxon>
    </lineage>
</organism>